<organism>
    <name type="scientific">Actinobacillus succinogenes (strain ATCC 55618 / DSM 22257 / CCUG 43843 / 130Z)</name>
    <dbReference type="NCBI Taxonomy" id="339671"/>
    <lineage>
        <taxon>Bacteria</taxon>
        <taxon>Pseudomonadati</taxon>
        <taxon>Pseudomonadota</taxon>
        <taxon>Gammaproteobacteria</taxon>
        <taxon>Pasteurellales</taxon>
        <taxon>Pasteurellaceae</taxon>
        <taxon>Actinobacillus</taxon>
    </lineage>
</organism>
<protein>
    <recommendedName>
        <fullName evidence="1">Regulator of ribonuclease activity A</fullName>
    </recommendedName>
</protein>
<accession>A6VLP4</accession>
<comment type="function">
    <text evidence="1">Globally modulates RNA abundance by binding to RNase E (Rne) and regulating its endonucleolytic activity. Can modulate Rne action in a substrate-dependent manner by altering the composition of the degradosome. Modulates RNA-binding and helicase activities of the degradosome.</text>
</comment>
<comment type="subunit">
    <text evidence="1">Homotrimer. Binds to both RNA-binding sites in the C-terminal region of Rne and to RhlB.</text>
</comment>
<comment type="subcellular location">
    <subcellularLocation>
        <location evidence="1">Cytoplasm</location>
    </subcellularLocation>
</comment>
<comment type="similarity">
    <text evidence="1">Belongs to the RraA family.</text>
</comment>
<reference key="1">
    <citation type="journal article" date="2010" name="BMC Genomics">
        <title>A genomic perspective on the potential of Actinobacillus succinogenes for industrial succinate production.</title>
        <authorList>
            <person name="McKinlay J.B."/>
            <person name="Laivenieks M."/>
            <person name="Schindler B.D."/>
            <person name="McKinlay A.A."/>
            <person name="Siddaramappa S."/>
            <person name="Challacombe J.F."/>
            <person name="Lowry S.R."/>
            <person name="Clum A."/>
            <person name="Lapidus A.L."/>
            <person name="Burkhart K.B."/>
            <person name="Harkins V."/>
            <person name="Vieille C."/>
        </authorList>
    </citation>
    <scope>NUCLEOTIDE SEQUENCE [LARGE SCALE GENOMIC DNA]</scope>
    <source>
        <strain>ATCC 55618 / DSM 22257 / CCUG 43843 / 130Z</strain>
    </source>
</reference>
<dbReference type="EMBL" id="CP000746">
    <property type="protein sequence ID" value="ABR73891.1"/>
    <property type="molecule type" value="Genomic_DNA"/>
</dbReference>
<dbReference type="RefSeq" id="WP_012072271.1">
    <property type="nucleotide sequence ID" value="NC_009655.1"/>
</dbReference>
<dbReference type="SMR" id="A6VLP4"/>
<dbReference type="STRING" id="339671.Asuc_0516"/>
<dbReference type="KEGG" id="asu:Asuc_0516"/>
<dbReference type="eggNOG" id="COG0684">
    <property type="taxonomic scope" value="Bacteria"/>
</dbReference>
<dbReference type="HOGENOM" id="CLU_072626_4_0_6"/>
<dbReference type="OrthoDB" id="943692at2"/>
<dbReference type="Proteomes" id="UP000001114">
    <property type="component" value="Chromosome"/>
</dbReference>
<dbReference type="GO" id="GO:0005737">
    <property type="term" value="C:cytoplasm"/>
    <property type="evidence" value="ECO:0007669"/>
    <property type="project" value="UniProtKB-SubCell"/>
</dbReference>
<dbReference type="GO" id="GO:0060698">
    <property type="term" value="F:endoribonuclease inhibitor activity"/>
    <property type="evidence" value="ECO:0007669"/>
    <property type="project" value="UniProtKB-UniRule"/>
</dbReference>
<dbReference type="GO" id="GO:0019899">
    <property type="term" value="F:enzyme binding"/>
    <property type="evidence" value="ECO:0007669"/>
    <property type="project" value="UniProtKB-UniRule"/>
</dbReference>
<dbReference type="GO" id="GO:0051252">
    <property type="term" value="P:regulation of RNA metabolic process"/>
    <property type="evidence" value="ECO:0007669"/>
    <property type="project" value="InterPro"/>
</dbReference>
<dbReference type="CDD" id="cd16841">
    <property type="entry name" value="RraA_family"/>
    <property type="match status" value="1"/>
</dbReference>
<dbReference type="Gene3D" id="3.50.30.40">
    <property type="entry name" value="Ribonuclease E inhibitor RraA/RraA-like"/>
    <property type="match status" value="1"/>
</dbReference>
<dbReference type="HAMAP" id="MF_00471">
    <property type="entry name" value="RraA"/>
    <property type="match status" value="1"/>
</dbReference>
<dbReference type="InterPro" id="IPR010203">
    <property type="entry name" value="RraA"/>
</dbReference>
<dbReference type="InterPro" id="IPR005493">
    <property type="entry name" value="RraA/RraA-like"/>
</dbReference>
<dbReference type="InterPro" id="IPR036704">
    <property type="entry name" value="RraA/RraA-like_sf"/>
</dbReference>
<dbReference type="InterPro" id="IPR014339">
    <property type="entry name" value="RraA_gpbac"/>
</dbReference>
<dbReference type="NCBIfam" id="TIGR01935">
    <property type="entry name" value="NOT-MenG"/>
    <property type="match status" value="1"/>
</dbReference>
<dbReference type="NCBIfam" id="NF006875">
    <property type="entry name" value="PRK09372.1"/>
    <property type="match status" value="1"/>
</dbReference>
<dbReference type="NCBIfam" id="TIGR02998">
    <property type="entry name" value="RraA_entero"/>
    <property type="match status" value="1"/>
</dbReference>
<dbReference type="PANTHER" id="PTHR33254">
    <property type="entry name" value="4-HYDROXY-4-METHYL-2-OXOGLUTARATE ALDOLASE 3-RELATED"/>
    <property type="match status" value="1"/>
</dbReference>
<dbReference type="PANTHER" id="PTHR33254:SF29">
    <property type="entry name" value="REGULATOR OF RIBONUCLEASE ACTIVITY A"/>
    <property type="match status" value="1"/>
</dbReference>
<dbReference type="Pfam" id="PF03737">
    <property type="entry name" value="RraA-like"/>
    <property type="match status" value="1"/>
</dbReference>
<dbReference type="SUPFAM" id="SSF89562">
    <property type="entry name" value="RraA-like"/>
    <property type="match status" value="1"/>
</dbReference>
<feature type="chain" id="PRO_1000072392" description="Regulator of ribonuclease activity A">
    <location>
        <begin position="1"/>
        <end position="166"/>
    </location>
</feature>
<proteinExistence type="inferred from homology"/>
<sequence length="166" mass="18154">MRIDTSELCDIYLDQVDVVDPIFSSFGGVQAFYGKVTTVKCFETNGLIEEILEENGEGRVLVIDGGGSIRRALIDAELARLAADNHWEGIIVYGAIRQLSELENIEIGIHALAPIPVSADESNYGESDIPVNFGGVTFFPEDYIYADLTGIILSQEPLDLDELNAE</sequence>
<gene>
    <name evidence="1" type="primary">rraA</name>
    <name type="ordered locus">Asuc_0516</name>
</gene>
<name>RRAA_ACTSZ</name>
<keyword id="KW-0963">Cytoplasm</keyword>
<keyword id="KW-1185">Reference proteome</keyword>
<evidence type="ECO:0000255" key="1">
    <source>
        <dbReference type="HAMAP-Rule" id="MF_00471"/>
    </source>
</evidence>